<protein>
    <recommendedName>
        <fullName evidence="7">GDP-mannose 6-dehydrogenase</fullName>
        <shortName evidence="7">GMD</shortName>
        <ecNumber evidence="4">1.1.1.132</ecNumber>
    </recommendedName>
    <alternativeName>
        <fullName evidence="6">Guanosine diphospho-D-mannose dehydrogenase</fullName>
    </alternativeName>
</protein>
<dbReference type="EC" id="1.1.1.132" evidence="4"/>
<dbReference type="EMBL" id="Y00337">
    <property type="protein sequence ID" value="CAA68425.1"/>
    <property type="molecule type" value="Genomic_DNA"/>
</dbReference>
<dbReference type="EMBL" id="AE004091">
    <property type="protein sequence ID" value="AAG06928.1"/>
    <property type="molecule type" value="Genomic_DNA"/>
</dbReference>
<dbReference type="EMBL" id="L22611">
    <property type="protein sequence ID" value="AAC36874.1"/>
    <property type="molecule type" value="Genomic_DNA"/>
</dbReference>
<dbReference type="PIR" id="H83203">
    <property type="entry name" value="H83203"/>
</dbReference>
<dbReference type="PIR" id="S07391">
    <property type="entry name" value="DEPSGD"/>
</dbReference>
<dbReference type="RefSeq" id="NP_252230.1">
    <property type="nucleotide sequence ID" value="NC_002516.2"/>
</dbReference>
<dbReference type="RefSeq" id="WP_003110461.1">
    <property type="nucleotide sequence ID" value="NZ_QZGE01000001.1"/>
</dbReference>
<dbReference type="PDB" id="1MFZ">
    <property type="method" value="X-ray"/>
    <property type="resolution" value="2.80 A"/>
    <property type="chains" value="A/B/C/D=1-436"/>
</dbReference>
<dbReference type="PDB" id="1MUU">
    <property type="method" value="X-ray"/>
    <property type="resolution" value="2.02 A"/>
    <property type="chains" value="A/B/C/D=1-436"/>
</dbReference>
<dbReference type="PDB" id="1MV8">
    <property type="method" value="X-ray"/>
    <property type="resolution" value="1.55 A"/>
    <property type="chains" value="A/B/C/D=1-436"/>
</dbReference>
<dbReference type="PDBsum" id="1MFZ"/>
<dbReference type="PDBsum" id="1MUU"/>
<dbReference type="PDBsum" id="1MV8"/>
<dbReference type="SMR" id="P11759"/>
<dbReference type="FunCoup" id="P11759">
    <property type="interactions" value="351"/>
</dbReference>
<dbReference type="STRING" id="208964.PA3540"/>
<dbReference type="DrugBank" id="DB04023">
    <property type="generic name" value="GDP-alpha-D-mannuronic acid"/>
</dbReference>
<dbReference type="PaxDb" id="208964-PA3540"/>
<dbReference type="GeneID" id="879004"/>
<dbReference type="KEGG" id="pae:PA3540"/>
<dbReference type="PATRIC" id="fig|208964.12.peg.3704"/>
<dbReference type="PseudoCAP" id="PA3540"/>
<dbReference type="HOGENOM" id="CLU_023810_1_1_6"/>
<dbReference type="InParanoid" id="P11759"/>
<dbReference type="OrthoDB" id="9803238at2"/>
<dbReference type="PhylomeDB" id="P11759"/>
<dbReference type="BioCyc" id="MetaCyc:MONOMER-14396"/>
<dbReference type="BioCyc" id="PAER208964:G1FZ6-3608-MONOMER"/>
<dbReference type="BRENDA" id="1.1.1.132">
    <property type="organism ID" value="5087"/>
</dbReference>
<dbReference type="UniPathway" id="UPA00286"/>
<dbReference type="EvolutionaryTrace" id="P11759"/>
<dbReference type="Proteomes" id="UP000002438">
    <property type="component" value="Chromosome"/>
</dbReference>
<dbReference type="GO" id="GO:0047919">
    <property type="term" value="F:GDP-mannose 6-dehydrogenase activity"/>
    <property type="evidence" value="ECO:0000314"/>
    <property type="project" value="PseudoCAP"/>
</dbReference>
<dbReference type="GO" id="GO:0051287">
    <property type="term" value="F:NAD binding"/>
    <property type="evidence" value="ECO:0000314"/>
    <property type="project" value="PseudoCAP"/>
</dbReference>
<dbReference type="GO" id="GO:0042121">
    <property type="term" value="P:alginic acid biosynthetic process"/>
    <property type="evidence" value="ECO:0000314"/>
    <property type="project" value="PseudoCAP"/>
</dbReference>
<dbReference type="GO" id="GO:0036460">
    <property type="term" value="P:cellular response to cell envelope stress"/>
    <property type="evidence" value="ECO:0000314"/>
    <property type="project" value="PseudoCAP"/>
</dbReference>
<dbReference type="GO" id="GO:0006970">
    <property type="term" value="P:response to osmotic stress"/>
    <property type="evidence" value="ECO:0000314"/>
    <property type="project" value="PseudoCAP"/>
</dbReference>
<dbReference type="GO" id="GO:0044010">
    <property type="term" value="P:single-species biofilm formation"/>
    <property type="evidence" value="ECO:0000314"/>
    <property type="project" value="PseudoCAP"/>
</dbReference>
<dbReference type="FunFam" id="3.40.50.720:FF:000573">
    <property type="entry name" value="GDP-mannose 6-dehydrogenase"/>
    <property type="match status" value="1"/>
</dbReference>
<dbReference type="FunFam" id="3.40.50.720:FF:000664">
    <property type="entry name" value="GDP-mannose 6-dehydrogenase"/>
    <property type="match status" value="1"/>
</dbReference>
<dbReference type="Gene3D" id="1.20.5.170">
    <property type="match status" value="1"/>
</dbReference>
<dbReference type="Gene3D" id="3.40.50.720">
    <property type="entry name" value="NAD(P)-binding Rossmann-like Domain"/>
    <property type="match status" value="2"/>
</dbReference>
<dbReference type="InterPro" id="IPR008927">
    <property type="entry name" value="6-PGluconate_DH-like_C_sf"/>
</dbReference>
<dbReference type="InterPro" id="IPR028358">
    <property type="entry name" value="GDPman_DH"/>
</dbReference>
<dbReference type="InterPro" id="IPR036291">
    <property type="entry name" value="NAD(P)-bd_dom_sf"/>
</dbReference>
<dbReference type="InterPro" id="IPR017476">
    <property type="entry name" value="UDP-Glc/GDP-Man"/>
</dbReference>
<dbReference type="InterPro" id="IPR014027">
    <property type="entry name" value="UDP-Glc/GDP-Man_DH_C"/>
</dbReference>
<dbReference type="InterPro" id="IPR036220">
    <property type="entry name" value="UDP-Glc/GDP-Man_DH_C_sf"/>
</dbReference>
<dbReference type="InterPro" id="IPR014026">
    <property type="entry name" value="UDP-Glc/GDP-Man_DH_dimer"/>
</dbReference>
<dbReference type="InterPro" id="IPR001732">
    <property type="entry name" value="UDP-Glc/GDP-Man_DH_N"/>
</dbReference>
<dbReference type="NCBIfam" id="TIGR03026">
    <property type="entry name" value="NDP-sugDHase"/>
    <property type="match status" value="1"/>
</dbReference>
<dbReference type="PANTHER" id="PTHR43750:SF1">
    <property type="entry name" value="GDP-MANNOSE 6-DEHYDROGENASE"/>
    <property type="match status" value="1"/>
</dbReference>
<dbReference type="PANTHER" id="PTHR43750">
    <property type="entry name" value="UDP-GLUCOSE 6-DEHYDROGENASE TUAD"/>
    <property type="match status" value="1"/>
</dbReference>
<dbReference type="Pfam" id="PF00984">
    <property type="entry name" value="UDPG_MGDP_dh"/>
    <property type="match status" value="1"/>
</dbReference>
<dbReference type="Pfam" id="PF03720">
    <property type="entry name" value="UDPG_MGDP_dh_C"/>
    <property type="match status" value="1"/>
</dbReference>
<dbReference type="Pfam" id="PF03721">
    <property type="entry name" value="UDPG_MGDP_dh_N"/>
    <property type="match status" value="1"/>
</dbReference>
<dbReference type="PIRSF" id="PIRSF500135">
    <property type="entry name" value="GDPman_DH"/>
    <property type="match status" value="1"/>
</dbReference>
<dbReference type="PIRSF" id="PIRSF000124">
    <property type="entry name" value="UDPglc_GDPman_dh"/>
    <property type="match status" value="1"/>
</dbReference>
<dbReference type="SMART" id="SM00984">
    <property type="entry name" value="UDPG_MGDP_dh_C"/>
    <property type="match status" value="1"/>
</dbReference>
<dbReference type="SUPFAM" id="SSF48179">
    <property type="entry name" value="6-phosphogluconate dehydrogenase C-terminal domain-like"/>
    <property type="match status" value="1"/>
</dbReference>
<dbReference type="SUPFAM" id="SSF51735">
    <property type="entry name" value="NAD(P)-binding Rossmann-fold domains"/>
    <property type="match status" value="1"/>
</dbReference>
<dbReference type="SUPFAM" id="SSF52413">
    <property type="entry name" value="UDP-glucose/GDP-mannose dehydrogenase C-terminal domain"/>
    <property type="match status" value="1"/>
</dbReference>
<sequence length="436" mass="47600">MRISIFGLGYVGAVCAGCLSARGHEVIGVDVSSTKIDLINQGKSPIVEPGLEALLQQGRQTGRLSGTTDFKKAVLDSDVSFICVGTPSKKNGDLDLGYIETVCREIGFAIREKSERHTVVVRSTVLPGTVNNVVIPLIEDCSGKKAGVDFGVGTNPEFLRESTAIKDYDFPPMTVIGELDKQTGDLLEEIYRELDAPIIRKTVEVAEMIKYTCNVWHAAKVTFANEIGNIAKAVGVDGREVMDVICQDHKLNLSRYYMRPGFAFGGSCLPKDVRALTYRASQLDVEHPMLGSLMRSNSNQVQKAFDLITSHDTRKVGLLGLSFKAGTDDLRESPLVELAEMLIGKGYELRIFDRNVEYARVHGANKEYIESKIPHVSSLLVSDLDEVVASSDVLVLGNGDELFVDLVNKTPSGKKLVDLVGFMPHTTTAQAEGICW</sequence>
<organism>
    <name type="scientific">Pseudomonas aeruginosa (strain ATCC 15692 / DSM 22644 / CIP 104116 / JCM 14847 / LMG 12228 / 1C / PRS 101 / PAO1)</name>
    <dbReference type="NCBI Taxonomy" id="208964"/>
    <lineage>
        <taxon>Bacteria</taxon>
        <taxon>Pseudomonadati</taxon>
        <taxon>Pseudomonadota</taxon>
        <taxon>Gammaproteobacteria</taxon>
        <taxon>Pseudomonadales</taxon>
        <taxon>Pseudomonadaceae</taxon>
        <taxon>Pseudomonas</taxon>
    </lineage>
</organism>
<gene>
    <name evidence="7" type="primary">algD</name>
    <name type="ordered locus">PA3540</name>
</gene>
<reference key="1">
    <citation type="journal article" date="1987" name="Nucleic Acids Res.">
        <title>Pseudomonas aeruginosa infection in cystic fibrosis: nucleotide sequence and transcriptional regulation of the algD gene.</title>
        <authorList>
            <person name="Deretic V."/>
            <person name="Gill J.F."/>
            <person name="Chakrabarty A.M."/>
        </authorList>
    </citation>
    <scope>NUCLEOTIDE SEQUENCE [GENOMIC DNA]</scope>
    <scope>FUNCTION</scope>
    <scope>PATHWAY</scope>
    <scope>INDUCTION</scope>
    <source>
        <strain>8830</strain>
    </source>
</reference>
<reference key="2">
    <citation type="journal article" date="2000" name="Nature">
        <title>Complete genome sequence of Pseudomonas aeruginosa PAO1, an opportunistic pathogen.</title>
        <authorList>
            <person name="Stover C.K."/>
            <person name="Pham X.-Q.T."/>
            <person name="Erwin A.L."/>
            <person name="Mizoguchi S.D."/>
            <person name="Warrener P."/>
            <person name="Hickey M.J."/>
            <person name="Brinkman F.S.L."/>
            <person name="Hufnagle W.O."/>
            <person name="Kowalik D.J."/>
            <person name="Lagrou M."/>
            <person name="Garber R.L."/>
            <person name="Goltry L."/>
            <person name="Tolentino E."/>
            <person name="Westbrock-Wadman S."/>
            <person name="Yuan Y."/>
            <person name="Brody L.L."/>
            <person name="Coulter S.N."/>
            <person name="Folger K.R."/>
            <person name="Kas A."/>
            <person name="Larbig K."/>
            <person name="Lim R.M."/>
            <person name="Smith K.A."/>
            <person name="Spencer D.H."/>
            <person name="Wong G.K.-S."/>
            <person name="Wu Z."/>
            <person name="Paulsen I.T."/>
            <person name="Reizer J."/>
            <person name="Saier M.H. Jr."/>
            <person name="Hancock R.E.W."/>
            <person name="Lory S."/>
            <person name="Olson M.V."/>
        </authorList>
    </citation>
    <scope>NUCLEOTIDE SEQUENCE [LARGE SCALE GENOMIC DNA]</scope>
    <source>
        <strain>ATCC 15692 / DSM 22644 / CIP 104116 / JCM 14847 / LMG 12228 / 1C / PRS 101 / PAO1</strain>
    </source>
</reference>
<reference key="3">
    <citation type="journal article" date="1989" name="J. Biol. Chem.">
        <title>Purification and characterization of guanosine diphospho-D-mannose dehydrogenase. A key enzyme in the biosynthesis of alginate by Pseudomonas aeruginosa.</title>
        <authorList>
            <person name="Roychoudhury S."/>
            <person name="May T.B."/>
            <person name="Gill J.F."/>
            <person name="Singh S.K."/>
            <person name="Feingold D.S."/>
            <person name="Chakrabarty A.M."/>
        </authorList>
    </citation>
    <scope>PROTEIN SEQUENCE OF 1-11</scope>
    <scope>FUNCTION</scope>
    <scope>CATALYTIC ACTIVITY</scope>
    <scope>ACTIVITY REGULATION</scope>
    <scope>BIOPHYSICOCHEMICAL PROPERTIES</scope>
    <scope>SUBUNIT</scope>
    <source>
        <strain>8830</strain>
    </source>
</reference>
<reference key="4">
    <citation type="journal article" date="1992" name="J. Biol. Chem.">
        <title>Characterization of guanosine diphospho-D-mannose dehydrogenase from Pseudomonas aeruginosa. Structural analysis by limited proteolysis.</title>
        <authorList>
            <person name="Roychoudhury S."/>
            <person name="Chakrabarty K."/>
            <person name="Ho Y.-K."/>
            <person name="Chakrabarty A.M."/>
        </authorList>
    </citation>
    <scope>PROTEIN SEQUENCE OF 1-11; 280-289 AND 297-306</scope>
    <scope>CATALYTIC ACTIVITY</scope>
    <scope>DOMAIN</scope>
    <source>
        <strain>8830</strain>
    </source>
</reference>
<reference key="5">
    <citation type="journal article" date="1993" name="Gene">
        <title>Sequence of the alg8 and alg44 genes involved in the synthesis of alginate by Pseudomonas aeruginosa.</title>
        <authorList>
            <person name="Maharaj R."/>
            <person name="May T.B."/>
            <person name="Wang S.-K."/>
            <person name="Chakrabarty A.M."/>
        </authorList>
    </citation>
    <scope>NUCLEOTIDE SEQUENCE [GENOMIC DNA] OF 425-435</scope>
    <source>
        <strain>8830</strain>
    </source>
</reference>
<reference key="6">
    <citation type="journal article" date="2002" name="Biochemistry">
        <title>Allosterism and cooperativity in Pseudomonas aeruginosa GDP-mannose dehydrogenase.</title>
        <authorList>
            <person name="Naught L.E."/>
            <person name="Gilbert S."/>
            <person name="Imhoff R."/>
            <person name="Snook C."/>
            <person name="Beamer L."/>
            <person name="Tipton P."/>
        </authorList>
    </citation>
    <scope>CATALYTIC ACTIVITY</scope>
    <scope>ACTIVITY REGULATION</scope>
    <scope>BIOPHYSICOCHEMICAL PROPERTIES</scope>
    <scope>SUBUNIT</scope>
    <source>
        <strain>ATCC 15692 / DSM 22644 / CIP 104116 / JCM 14847 / LMG 12228 / 1C / PRS 101 / PAO1</strain>
    </source>
</reference>
<reference evidence="13 14 15" key="7">
    <citation type="journal article" date="2003" name="Biochemistry">
        <title>Crystal structure of GDP-mannose dehydrogenase: a key enzyme of alginate biosynthesis in P. aeruginosa.</title>
        <authorList>
            <person name="Snook C.F."/>
            <person name="Tipton P.A."/>
            <person name="Beamer L.J."/>
        </authorList>
    </citation>
    <scope>X-RAY CRYSTALLOGRAPHY (1.55 ANGSTROMS) IN COMPLEXES WITH NAD AND GDP-ALPHA-D-MANNURONATE</scope>
    <scope>FUNCTION</scope>
    <scope>ACTIVE SITE</scope>
    <scope>SUBUNIT</scope>
    <scope>PATHWAY</scope>
</reference>
<feature type="chain" id="PRO_0000074067" description="GDP-mannose 6-dehydrogenase">
    <location>
        <begin position="1"/>
        <end position="436"/>
    </location>
</feature>
<feature type="region of interest" description="Inter-domain linker" evidence="3">
    <location>
        <begin position="278"/>
        <end position="295"/>
    </location>
</feature>
<feature type="active site" description="Nucleophile" evidence="10">
    <location>
        <position position="268"/>
    </location>
</feature>
<feature type="binding site" description="in chain A" evidence="2 14 15">
    <location>
        <position position="10"/>
    </location>
    <ligand>
        <name>NAD(+)</name>
        <dbReference type="ChEBI" id="CHEBI:57540"/>
        <note>ligand shared between homodimeric partners</note>
    </ligand>
</feature>
<feature type="binding site" description="in chain A" evidence="2 14 15">
    <location>
        <position position="11"/>
    </location>
    <ligand>
        <name>NAD(+)</name>
        <dbReference type="ChEBI" id="CHEBI:57540"/>
        <note>ligand shared between homodimeric partners</note>
    </ligand>
</feature>
<feature type="binding site" description="in chain A" evidence="2 14 15">
    <location>
        <position position="30"/>
    </location>
    <ligand>
        <name>NAD(+)</name>
        <dbReference type="ChEBI" id="CHEBI:57540"/>
        <note>ligand shared between homodimeric partners</note>
    </ligand>
</feature>
<feature type="binding site" description="in chain A" evidence="2 14 15">
    <location>
        <position position="35"/>
    </location>
    <ligand>
        <name>NAD(+)</name>
        <dbReference type="ChEBI" id="CHEBI:57540"/>
        <note>ligand shared between homodimeric partners</note>
    </ligand>
</feature>
<feature type="binding site" description="in chain A" evidence="2 14 15">
    <location>
        <position position="86"/>
    </location>
    <ligand>
        <name>NAD(+)</name>
        <dbReference type="ChEBI" id="CHEBI:57540"/>
        <note>ligand shared between homodimeric partners</note>
    </ligand>
</feature>
<feature type="binding site" description="in chain A" evidence="2 14 15">
    <location>
        <position position="124"/>
    </location>
    <ligand>
        <name>NAD(+)</name>
        <dbReference type="ChEBI" id="CHEBI:57540"/>
        <note>ligand shared between homodimeric partners</note>
    </ligand>
</feature>
<feature type="binding site" description="in chain A" evidence="2 14">
    <location>
        <position position="161"/>
    </location>
    <ligand>
        <name>GDP-alpha-D-mannuronate</name>
        <dbReference type="ChEBI" id="CHEBI:84886"/>
        <note>ligand shared between homodimeric partners</note>
    </ligand>
</feature>
<feature type="binding site" description="in chain A" evidence="2 14">
    <location>
        <position position="210"/>
    </location>
    <ligand>
        <name>GDP-alpha-D-mannuronate</name>
        <dbReference type="ChEBI" id="CHEBI:84886"/>
        <note>ligand shared between homodimeric partners</note>
    </ligand>
</feature>
<feature type="binding site" description="in chain A" evidence="2 14">
    <location>
        <position position="214"/>
    </location>
    <ligand>
        <name>GDP-alpha-D-mannuronate</name>
        <dbReference type="ChEBI" id="CHEBI:84886"/>
        <note>ligand shared between homodimeric partners</note>
    </ligand>
</feature>
<feature type="binding site" description="in chain A" evidence="2 14">
    <location>
        <position position="217"/>
    </location>
    <ligand>
        <name>GDP-alpha-D-mannuronate</name>
        <dbReference type="ChEBI" id="CHEBI:84886"/>
        <note>ligand shared between homodimeric partners</note>
    </ligand>
</feature>
<feature type="binding site" description="in chain A" evidence="2 14">
    <location>
        <position position="225"/>
    </location>
    <ligand>
        <name>GDP-alpha-D-mannuronate</name>
        <dbReference type="ChEBI" id="CHEBI:84886"/>
        <note>ligand shared between homodimeric partners</note>
    </ligand>
</feature>
<feature type="binding site" description="in chain B" evidence="2 14">
    <location>
        <position position="256"/>
    </location>
    <ligand>
        <name>GDP-alpha-D-mannuronate</name>
        <dbReference type="ChEBI" id="CHEBI:84886"/>
        <note>ligand shared between homodimeric partners</note>
    </ligand>
</feature>
<feature type="binding site" description="in chain B" evidence="2 14">
    <location>
        <position position="257"/>
    </location>
    <ligand>
        <name>GDP-alpha-D-mannuronate</name>
        <dbReference type="ChEBI" id="CHEBI:84886"/>
        <note>ligand shared between homodimeric partners</note>
    </ligand>
</feature>
<feature type="binding site" description="in chain B" evidence="2 14">
    <location>
        <position position="259"/>
    </location>
    <ligand>
        <name>GDP-alpha-D-mannuronate</name>
        <dbReference type="ChEBI" id="CHEBI:84886"/>
        <note>ligand shared between homodimeric partners</note>
    </ligand>
</feature>
<feature type="binding site" description="in chain B" evidence="2 14">
    <location>
        <position position="262"/>
    </location>
    <ligand>
        <name>GDP-alpha-D-mannuronate</name>
        <dbReference type="ChEBI" id="CHEBI:84886"/>
        <note>ligand shared between homodimeric partners</note>
    </ligand>
</feature>
<feature type="binding site" description="in chain B" evidence="2 14">
    <location>
        <position position="265"/>
    </location>
    <ligand>
        <name>GDP-alpha-D-mannuronate</name>
        <dbReference type="ChEBI" id="CHEBI:84886"/>
        <note>ligand shared between homodimeric partners</note>
    </ligand>
</feature>
<feature type="binding site" description="in chain B" evidence="2 14 15">
    <location>
        <position position="271"/>
    </location>
    <ligand>
        <name>NAD(+)</name>
        <dbReference type="ChEBI" id="CHEBI:57540"/>
        <note>ligand shared between homodimeric partners</note>
    </ligand>
</feature>
<feature type="binding site" description="in chain B" evidence="2 14">
    <location>
        <position position="324"/>
    </location>
    <ligand>
        <name>GDP-alpha-D-mannuronate</name>
        <dbReference type="ChEBI" id="CHEBI:84886"/>
        <note>ligand shared between homodimeric partners</note>
    </ligand>
</feature>
<feature type="binding site" description="in chain B" evidence="2 14 15">
    <location>
        <position position="331"/>
    </location>
    <ligand>
        <name>NAD(+)</name>
        <dbReference type="ChEBI" id="CHEBI:57540"/>
        <note>ligand shared between homodimeric partners</note>
    </ligand>
</feature>
<feature type="sequence variant" description="In strain: 3380." evidence="9">
    <original>L</original>
    <variation>F</variation>
    <location>
        <position position="349"/>
    </location>
</feature>
<feature type="strand" evidence="16">
    <location>
        <begin position="2"/>
        <end position="6"/>
    </location>
</feature>
<feature type="helix" evidence="16">
    <location>
        <begin position="12"/>
        <end position="21"/>
    </location>
</feature>
<feature type="strand" evidence="16">
    <location>
        <begin position="25"/>
        <end position="29"/>
    </location>
</feature>
<feature type="helix" evidence="16">
    <location>
        <begin position="33"/>
        <end position="40"/>
    </location>
</feature>
<feature type="helix" evidence="16">
    <location>
        <begin position="51"/>
        <end position="60"/>
    </location>
</feature>
<feature type="strand" evidence="16">
    <location>
        <begin position="64"/>
        <end position="68"/>
    </location>
</feature>
<feature type="helix" evidence="16">
    <location>
        <begin position="70"/>
        <end position="75"/>
    </location>
</feature>
<feature type="strand" evidence="16">
    <location>
        <begin position="78"/>
        <end position="82"/>
    </location>
</feature>
<feature type="strand" evidence="16">
    <location>
        <begin position="92"/>
        <end position="94"/>
    </location>
</feature>
<feature type="helix" evidence="16">
    <location>
        <begin position="97"/>
        <end position="110"/>
    </location>
</feature>
<feature type="strand" evidence="16">
    <location>
        <begin position="118"/>
        <end position="121"/>
    </location>
</feature>
<feature type="helix" evidence="16">
    <location>
        <begin position="129"/>
        <end position="132"/>
    </location>
</feature>
<feature type="helix" evidence="16">
    <location>
        <begin position="134"/>
        <end position="142"/>
    </location>
</feature>
<feature type="turn" evidence="16">
    <location>
        <begin position="147"/>
        <end position="149"/>
    </location>
</feature>
<feature type="strand" evidence="16">
    <location>
        <begin position="150"/>
        <end position="154"/>
    </location>
</feature>
<feature type="helix" evidence="16">
    <location>
        <begin position="164"/>
        <end position="169"/>
    </location>
</feature>
<feature type="strand" evidence="16">
    <location>
        <begin position="174"/>
        <end position="180"/>
    </location>
</feature>
<feature type="helix" evidence="16">
    <location>
        <begin position="181"/>
        <end position="191"/>
    </location>
</feature>
<feature type="strand" evidence="16">
    <location>
        <begin position="194"/>
        <end position="196"/>
    </location>
</feature>
<feature type="strand" evidence="16">
    <location>
        <begin position="198"/>
        <end position="202"/>
    </location>
</feature>
<feature type="helix" evidence="16">
    <location>
        <begin position="203"/>
        <end position="233"/>
    </location>
</feature>
<feature type="helix" evidence="16">
    <location>
        <begin position="238"/>
        <end position="245"/>
    </location>
</feature>
<feature type="turn" evidence="16">
    <location>
        <begin position="249"/>
        <end position="253"/>
    </location>
</feature>
<feature type="strand" evidence="16">
    <location>
        <begin position="266"/>
        <end position="268"/>
    </location>
</feature>
<feature type="helix" evidence="16">
    <location>
        <begin position="269"/>
        <end position="282"/>
    </location>
</feature>
<feature type="helix" evidence="16">
    <location>
        <begin position="290"/>
        <end position="292"/>
    </location>
</feature>
<feature type="helix" evidence="16">
    <location>
        <begin position="293"/>
        <end position="308"/>
    </location>
</feature>
<feature type="strand" evidence="16">
    <location>
        <begin position="315"/>
        <end position="319"/>
    </location>
</feature>
<feature type="strand" evidence="16">
    <location>
        <begin position="322"/>
        <end position="324"/>
    </location>
</feature>
<feature type="helix" evidence="16">
    <location>
        <begin position="334"/>
        <end position="344"/>
    </location>
</feature>
<feature type="strand" evidence="16">
    <location>
        <begin position="348"/>
        <end position="352"/>
    </location>
</feature>
<feature type="helix" evidence="16">
    <location>
        <begin position="354"/>
        <end position="359"/>
    </location>
</feature>
<feature type="strand" evidence="16">
    <location>
        <begin position="362"/>
        <end position="364"/>
    </location>
</feature>
<feature type="helix" evidence="16">
    <location>
        <begin position="366"/>
        <end position="371"/>
    </location>
</feature>
<feature type="helix" evidence="16">
    <location>
        <begin position="374"/>
        <end position="377"/>
    </location>
</feature>
<feature type="helix" evidence="16">
    <location>
        <begin position="384"/>
        <end position="390"/>
    </location>
</feature>
<feature type="strand" evidence="16">
    <location>
        <begin position="392"/>
        <end position="396"/>
    </location>
</feature>
<feature type="helix" evidence="16">
    <location>
        <begin position="401"/>
        <end position="403"/>
    </location>
</feature>
<feature type="helix" evidence="16">
    <location>
        <begin position="404"/>
        <end position="408"/>
    </location>
</feature>
<feature type="strand" evidence="16">
    <location>
        <begin position="415"/>
        <end position="421"/>
    </location>
</feature>
<feature type="strand" evidence="16">
    <location>
        <begin position="424"/>
        <end position="426"/>
    </location>
</feature>
<feature type="strand" evidence="16">
    <location>
        <begin position="429"/>
        <end position="434"/>
    </location>
</feature>
<proteinExistence type="evidence at protein level"/>
<comment type="function">
    <text evidence="4 10 11 12">Catalyzes the oxidation of guanosine diphospho-D-mannose (GDP-D-mannose) to GDP-D-mannuronic acid, a precursor for alginate polymerization. The alginate layer causes a mucoid phenotype and provides a protective barrier against host immune defenses and antibiotics (Probable). Other sugars are not used as substrates (PubMed:2470755).</text>
</comment>
<comment type="catalytic activity">
    <reaction evidence="1 3 4">
        <text>GDP-alpha-D-mannose + 2 NAD(+) + H2O = GDP-alpha-D-mannuronate + 2 NADH + 3 H(+)</text>
        <dbReference type="Rhea" id="RHEA:21728"/>
        <dbReference type="ChEBI" id="CHEBI:15377"/>
        <dbReference type="ChEBI" id="CHEBI:15378"/>
        <dbReference type="ChEBI" id="CHEBI:57527"/>
        <dbReference type="ChEBI" id="CHEBI:57540"/>
        <dbReference type="ChEBI" id="CHEBI:57945"/>
        <dbReference type="ChEBI" id="CHEBI:84886"/>
        <dbReference type="EC" id="1.1.1.132"/>
    </reaction>
    <physiologicalReaction direction="left-to-right" evidence="1 3 4">
        <dbReference type="Rhea" id="RHEA:21729"/>
    </physiologicalReaction>
</comment>
<comment type="activity regulation">
    <text evidence="1 4">Inhibited by GMP, ATP, GDP-D-glucose and maltose (PubMed:2470755). Inhibited by GMP and deamidoNAD (PubMed:12135385).</text>
</comment>
<comment type="biophysicochemical properties">
    <kinetics>
        <KM evidence="4">14.9 uM for GDP-D-mannose</KM>
        <KM evidence="1">4.1 uM for GDP-D-mannose</KM>
        <KM evidence="4">185 uM for NAD(+)</KM>
        <KM evidence="1">92 uM for NAD(+)</KM>
        <Vmax evidence="4">581.4 nmol/min/mg enzyme</Vmax>
    </kinetics>
    <phDependence>
        <text evidence="4">Optimum pH is 7.7.</text>
    </phDependence>
    <temperatureDependence>
        <text evidence="4">Optimum temperature is 50 degrees Celsius. Stable at 57.5 degrees Celsius, pH 5.0 for 10 minutes, used to purify protein.</text>
    </temperatureDependence>
</comment>
<comment type="pathway">
    <text evidence="10 12">Glycan biosynthesis; alginate biosynthesis.</text>
</comment>
<comment type="subunit">
    <text evidence="2 9 10 11">Forms a domain-swapped dimer with each peptide contributing to each active site. The dimers assemble further (PubMed:12705829). X-ray structures indicate this enzyme exists as a homotetramer PubMed:12705829, but kinetic and physical results obtained in PubMed:2470755 and PubMed:12135385 indicate that it is probably a homohexamer (Probable).</text>
</comment>
<comment type="induction">
    <text evidence="5">Highly expressed in mucoid but not non-mucoid cells, probably activated by algR.</text>
</comment>
<comment type="domain">
    <text evidence="3">The N-terminus (about 270 residues) binds NAD(+) and GDP-alpha-D-mannose and is joined to C-terminal domain by an exposed linker.</text>
</comment>
<comment type="similarity">
    <text evidence="8">Belongs to the UDP-glucose/GDP-mannose dehydrogenase family.</text>
</comment>
<comment type="online information" name="Protein Spotlight">
    <link uri="https://www.proteinspotlight.org/back_issues/037"/>
    <text>Slime with a design - Issue 37 of August 2003</text>
</comment>
<keyword id="KW-0002">3D-structure</keyword>
<keyword id="KW-0016">Alginate biosynthesis</keyword>
<keyword id="KW-0903">Direct protein sequencing</keyword>
<keyword id="KW-0520">NAD</keyword>
<keyword id="KW-0560">Oxidoreductase</keyword>
<keyword id="KW-1185">Reference proteome</keyword>
<evidence type="ECO:0000269" key="1">
    <source>
    </source>
</evidence>
<evidence type="ECO:0000269" key="2">
    <source>
    </source>
</evidence>
<evidence type="ECO:0000269" key="3">
    <source>
    </source>
</evidence>
<evidence type="ECO:0000269" key="4">
    <source>
    </source>
</evidence>
<evidence type="ECO:0000269" key="5">
    <source>
    </source>
</evidence>
<evidence type="ECO:0000303" key="6">
    <source>
    </source>
</evidence>
<evidence type="ECO:0000303" key="7">
    <source>
    </source>
</evidence>
<evidence type="ECO:0000305" key="8"/>
<evidence type="ECO:0000305" key="9">
    <source>
    </source>
</evidence>
<evidence type="ECO:0000305" key="10">
    <source>
    </source>
</evidence>
<evidence type="ECO:0000305" key="11">
    <source>
    </source>
</evidence>
<evidence type="ECO:0000305" key="12">
    <source>
    </source>
</evidence>
<evidence type="ECO:0007744" key="13">
    <source>
        <dbReference type="PDB" id="1MFZ"/>
    </source>
</evidence>
<evidence type="ECO:0007744" key="14">
    <source>
        <dbReference type="PDB" id="1MUU"/>
    </source>
</evidence>
<evidence type="ECO:0007744" key="15">
    <source>
        <dbReference type="PDB" id="1MV8"/>
    </source>
</evidence>
<evidence type="ECO:0007829" key="16">
    <source>
        <dbReference type="PDB" id="1MV8"/>
    </source>
</evidence>
<accession>P11759</accession>
<accession>Q9HY71</accession>
<name>ALGD_PSEAE</name>